<comment type="function">
    <text evidence="1">Attaches a formyl group to the free amino group of methionyl-tRNA(fMet). The formyl group appears to play a dual role in the initiator identity of N-formylmethionyl-tRNA by promoting its recognition by IF2 and preventing the misappropriation of this tRNA by the elongation apparatus.</text>
</comment>
<comment type="catalytic activity">
    <reaction evidence="1">
        <text>L-methionyl-tRNA(fMet) + (6R)-10-formyltetrahydrofolate = N-formyl-L-methionyl-tRNA(fMet) + (6S)-5,6,7,8-tetrahydrofolate + H(+)</text>
        <dbReference type="Rhea" id="RHEA:24380"/>
        <dbReference type="Rhea" id="RHEA-COMP:9952"/>
        <dbReference type="Rhea" id="RHEA-COMP:9953"/>
        <dbReference type="ChEBI" id="CHEBI:15378"/>
        <dbReference type="ChEBI" id="CHEBI:57453"/>
        <dbReference type="ChEBI" id="CHEBI:78530"/>
        <dbReference type="ChEBI" id="CHEBI:78844"/>
        <dbReference type="ChEBI" id="CHEBI:195366"/>
        <dbReference type="EC" id="2.1.2.9"/>
    </reaction>
</comment>
<comment type="similarity">
    <text evidence="1">Belongs to the Fmt family.</text>
</comment>
<gene>
    <name evidence="1" type="primary">fmt</name>
    <name type="ordered locus">EC55989_3704</name>
</gene>
<sequence>MSESLRIIFAGTPDFAARHLDALLSSGHNVVGVFTQPDRPAGRGKKLMPSPVKVLAEEKGLPVFQPVSLRPQENQQLVADLQADVMVVVAYGLILPKAVLEMPRLGCINVHGSLLPRWRGAAPIQRSLWAGDAETGVTIMQMDVGLDTGDMLYKLSCPITAEDTSGTLYDKLAELGPQGLITTLKQLADGTAKPEVQDETLVTYAEKLSKEEARIDWSLSAAQLERCIRAFNPWPMSWLEIEGQPVKVWKASVIDTATNAAPGTILEANKQGIQVATGDGILNLLSLQPAGKKAMSAQDLLNSRREWFVPGNRLV</sequence>
<accession>B7LHY8</accession>
<name>FMT_ECO55</name>
<feature type="chain" id="PRO_1000190023" description="Methionyl-tRNA formyltransferase">
    <location>
        <begin position="1"/>
        <end position="315"/>
    </location>
</feature>
<feature type="binding site" evidence="1">
    <location>
        <begin position="113"/>
        <end position="116"/>
    </location>
    <ligand>
        <name>(6S)-5,6,7,8-tetrahydrofolate</name>
        <dbReference type="ChEBI" id="CHEBI:57453"/>
    </ligand>
</feature>
<keyword id="KW-0648">Protein biosynthesis</keyword>
<keyword id="KW-1185">Reference proteome</keyword>
<keyword id="KW-0808">Transferase</keyword>
<reference key="1">
    <citation type="journal article" date="2009" name="PLoS Genet.">
        <title>Organised genome dynamics in the Escherichia coli species results in highly diverse adaptive paths.</title>
        <authorList>
            <person name="Touchon M."/>
            <person name="Hoede C."/>
            <person name="Tenaillon O."/>
            <person name="Barbe V."/>
            <person name="Baeriswyl S."/>
            <person name="Bidet P."/>
            <person name="Bingen E."/>
            <person name="Bonacorsi S."/>
            <person name="Bouchier C."/>
            <person name="Bouvet O."/>
            <person name="Calteau A."/>
            <person name="Chiapello H."/>
            <person name="Clermont O."/>
            <person name="Cruveiller S."/>
            <person name="Danchin A."/>
            <person name="Diard M."/>
            <person name="Dossat C."/>
            <person name="Karoui M.E."/>
            <person name="Frapy E."/>
            <person name="Garry L."/>
            <person name="Ghigo J.M."/>
            <person name="Gilles A.M."/>
            <person name="Johnson J."/>
            <person name="Le Bouguenec C."/>
            <person name="Lescat M."/>
            <person name="Mangenot S."/>
            <person name="Martinez-Jehanne V."/>
            <person name="Matic I."/>
            <person name="Nassif X."/>
            <person name="Oztas S."/>
            <person name="Petit M.A."/>
            <person name="Pichon C."/>
            <person name="Rouy Z."/>
            <person name="Ruf C.S."/>
            <person name="Schneider D."/>
            <person name="Tourret J."/>
            <person name="Vacherie B."/>
            <person name="Vallenet D."/>
            <person name="Medigue C."/>
            <person name="Rocha E.P.C."/>
            <person name="Denamur E."/>
        </authorList>
    </citation>
    <scope>NUCLEOTIDE SEQUENCE [LARGE SCALE GENOMIC DNA]</scope>
    <source>
        <strain>55989 / EAEC</strain>
    </source>
</reference>
<dbReference type="EC" id="2.1.2.9" evidence="1"/>
<dbReference type="EMBL" id="CU928145">
    <property type="protein sequence ID" value="CAU99983.1"/>
    <property type="molecule type" value="Genomic_DNA"/>
</dbReference>
<dbReference type="RefSeq" id="WP_000004454.1">
    <property type="nucleotide sequence ID" value="NC_011748.1"/>
</dbReference>
<dbReference type="SMR" id="B7LHY8"/>
<dbReference type="KEGG" id="eck:EC55989_3704"/>
<dbReference type="HOGENOM" id="CLU_033347_1_2_6"/>
<dbReference type="Proteomes" id="UP000000746">
    <property type="component" value="Chromosome"/>
</dbReference>
<dbReference type="GO" id="GO:0005829">
    <property type="term" value="C:cytosol"/>
    <property type="evidence" value="ECO:0007669"/>
    <property type="project" value="TreeGrafter"/>
</dbReference>
<dbReference type="GO" id="GO:0004479">
    <property type="term" value="F:methionyl-tRNA formyltransferase activity"/>
    <property type="evidence" value="ECO:0007669"/>
    <property type="project" value="UniProtKB-UniRule"/>
</dbReference>
<dbReference type="CDD" id="cd08646">
    <property type="entry name" value="FMT_core_Met-tRNA-FMT_N"/>
    <property type="match status" value="1"/>
</dbReference>
<dbReference type="CDD" id="cd08704">
    <property type="entry name" value="Met_tRNA_FMT_C"/>
    <property type="match status" value="1"/>
</dbReference>
<dbReference type="FunFam" id="3.10.25.10:FF:000001">
    <property type="entry name" value="Methionyl-tRNA formyltransferase"/>
    <property type="match status" value="1"/>
</dbReference>
<dbReference type="FunFam" id="3.40.50.170:FF:000003">
    <property type="entry name" value="Methionyl-tRNA formyltransferase"/>
    <property type="match status" value="1"/>
</dbReference>
<dbReference type="Gene3D" id="3.10.25.10">
    <property type="entry name" value="Formyl transferase, C-terminal domain"/>
    <property type="match status" value="1"/>
</dbReference>
<dbReference type="Gene3D" id="3.40.50.170">
    <property type="entry name" value="Formyl transferase, N-terminal domain"/>
    <property type="match status" value="1"/>
</dbReference>
<dbReference type="HAMAP" id="MF_00182">
    <property type="entry name" value="Formyl_trans"/>
    <property type="match status" value="1"/>
</dbReference>
<dbReference type="InterPro" id="IPR005794">
    <property type="entry name" value="Fmt"/>
</dbReference>
<dbReference type="InterPro" id="IPR005793">
    <property type="entry name" value="Formyl_trans_C"/>
</dbReference>
<dbReference type="InterPro" id="IPR037022">
    <property type="entry name" value="Formyl_trans_C_sf"/>
</dbReference>
<dbReference type="InterPro" id="IPR002376">
    <property type="entry name" value="Formyl_transf_N"/>
</dbReference>
<dbReference type="InterPro" id="IPR036477">
    <property type="entry name" value="Formyl_transf_N_sf"/>
</dbReference>
<dbReference type="InterPro" id="IPR011034">
    <property type="entry name" value="Formyl_transferase-like_C_sf"/>
</dbReference>
<dbReference type="InterPro" id="IPR001555">
    <property type="entry name" value="GART_AS"/>
</dbReference>
<dbReference type="InterPro" id="IPR044135">
    <property type="entry name" value="Met-tRNA-FMT_C"/>
</dbReference>
<dbReference type="InterPro" id="IPR041711">
    <property type="entry name" value="Met-tRNA-FMT_N"/>
</dbReference>
<dbReference type="NCBIfam" id="TIGR00460">
    <property type="entry name" value="fmt"/>
    <property type="match status" value="1"/>
</dbReference>
<dbReference type="PANTHER" id="PTHR11138">
    <property type="entry name" value="METHIONYL-TRNA FORMYLTRANSFERASE"/>
    <property type="match status" value="1"/>
</dbReference>
<dbReference type="PANTHER" id="PTHR11138:SF5">
    <property type="entry name" value="METHIONYL-TRNA FORMYLTRANSFERASE, MITOCHONDRIAL"/>
    <property type="match status" value="1"/>
</dbReference>
<dbReference type="Pfam" id="PF02911">
    <property type="entry name" value="Formyl_trans_C"/>
    <property type="match status" value="1"/>
</dbReference>
<dbReference type="Pfam" id="PF00551">
    <property type="entry name" value="Formyl_trans_N"/>
    <property type="match status" value="1"/>
</dbReference>
<dbReference type="SUPFAM" id="SSF50486">
    <property type="entry name" value="FMT C-terminal domain-like"/>
    <property type="match status" value="1"/>
</dbReference>
<dbReference type="SUPFAM" id="SSF53328">
    <property type="entry name" value="Formyltransferase"/>
    <property type="match status" value="1"/>
</dbReference>
<dbReference type="PROSITE" id="PS00373">
    <property type="entry name" value="GART"/>
    <property type="match status" value="1"/>
</dbReference>
<protein>
    <recommendedName>
        <fullName evidence="1">Methionyl-tRNA formyltransferase</fullName>
        <ecNumber evidence="1">2.1.2.9</ecNumber>
    </recommendedName>
</protein>
<evidence type="ECO:0000255" key="1">
    <source>
        <dbReference type="HAMAP-Rule" id="MF_00182"/>
    </source>
</evidence>
<proteinExistence type="inferred from homology"/>
<organism>
    <name type="scientific">Escherichia coli (strain 55989 / EAEC)</name>
    <dbReference type="NCBI Taxonomy" id="585055"/>
    <lineage>
        <taxon>Bacteria</taxon>
        <taxon>Pseudomonadati</taxon>
        <taxon>Pseudomonadota</taxon>
        <taxon>Gammaproteobacteria</taxon>
        <taxon>Enterobacterales</taxon>
        <taxon>Enterobacteriaceae</taxon>
        <taxon>Escherichia</taxon>
    </lineage>
</organism>